<reference key="1">
    <citation type="journal article" date="2003" name="Nat. Genet.">
        <title>Comparative analysis of the genome sequences of Bordetella pertussis, Bordetella parapertussis and Bordetella bronchiseptica.</title>
        <authorList>
            <person name="Parkhill J."/>
            <person name="Sebaihia M."/>
            <person name="Preston A."/>
            <person name="Murphy L.D."/>
            <person name="Thomson N.R."/>
            <person name="Harris D.E."/>
            <person name="Holden M.T.G."/>
            <person name="Churcher C.M."/>
            <person name="Bentley S.D."/>
            <person name="Mungall K.L."/>
            <person name="Cerdeno-Tarraga A.-M."/>
            <person name="Temple L."/>
            <person name="James K.D."/>
            <person name="Harris B."/>
            <person name="Quail M.A."/>
            <person name="Achtman M."/>
            <person name="Atkin R."/>
            <person name="Baker S."/>
            <person name="Basham D."/>
            <person name="Bason N."/>
            <person name="Cherevach I."/>
            <person name="Chillingworth T."/>
            <person name="Collins M."/>
            <person name="Cronin A."/>
            <person name="Davis P."/>
            <person name="Doggett J."/>
            <person name="Feltwell T."/>
            <person name="Goble A."/>
            <person name="Hamlin N."/>
            <person name="Hauser H."/>
            <person name="Holroyd S."/>
            <person name="Jagels K."/>
            <person name="Leather S."/>
            <person name="Moule S."/>
            <person name="Norberczak H."/>
            <person name="O'Neil S."/>
            <person name="Ormond D."/>
            <person name="Price C."/>
            <person name="Rabbinowitsch E."/>
            <person name="Rutter S."/>
            <person name="Sanders M."/>
            <person name="Saunders D."/>
            <person name="Seeger K."/>
            <person name="Sharp S."/>
            <person name="Simmonds M."/>
            <person name="Skelton J."/>
            <person name="Squares R."/>
            <person name="Squares S."/>
            <person name="Stevens K."/>
            <person name="Unwin L."/>
            <person name="Whitehead S."/>
            <person name="Barrell B.G."/>
            <person name="Maskell D.J."/>
        </authorList>
    </citation>
    <scope>NUCLEOTIDE SEQUENCE [LARGE SCALE GENOMIC DNA]</scope>
    <source>
        <strain>Tohama I / ATCC BAA-589 / NCTC 13251</strain>
    </source>
</reference>
<organism>
    <name type="scientific">Bordetella pertussis (strain Tohama I / ATCC BAA-589 / NCTC 13251)</name>
    <dbReference type="NCBI Taxonomy" id="257313"/>
    <lineage>
        <taxon>Bacteria</taxon>
        <taxon>Pseudomonadati</taxon>
        <taxon>Pseudomonadota</taxon>
        <taxon>Betaproteobacteria</taxon>
        <taxon>Burkholderiales</taxon>
        <taxon>Alcaligenaceae</taxon>
        <taxon>Bordetella</taxon>
    </lineage>
</organism>
<comment type="function">
    <text evidence="2">One of the essential components for the initiation of protein synthesis. Protects formylmethionyl-tRNA from spontaneous hydrolysis and promotes its binding to the 30S ribosomal subunits. Also involved in the hydrolysis of GTP during the formation of the 70S ribosomal complex.</text>
</comment>
<comment type="subcellular location">
    <subcellularLocation>
        <location evidence="2">Cytoplasm</location>
    </subcellularLocation>
</comment>
<comment type="similarity">
    <text evidence="2">Belongs to the TRAFAC class translation factor GTPase superfamily. Classic translation factor GTPase family. IF-2 subfamily.</text>
</comment>
<dbReference type="EMBL" id="BX640414">
    <property type="protein sequence ID" value="CAE41543.1"/>
    <property type="molecule type" value="Genomic_DNA"/>
</dbReference>
<dbReference type="RefSeq" id="NP_880019.1">
    <property type="nucleotide sequence ID" value="NC_002929.2"/>
</dbReference>
<dbReference type="RefSeq" id="WP_010930271.1">
    <property type="nucleotide sequence ID" value="NZ_CP039022.1"/>
</dbReference>
<dbReference type="SMR" id="Q7VYR2"/>
<dbReference type="STRING" id="257313.BP1247"/>
<dbReference type="PaxDb" id="257313-BP1247"/>
<dbReference type="GeneID" id="69601164"/>
<dbReference type="KEGG" id="bpe:BP1247"/>
<dbReference type="PATRIC" id="fig|257313.5.peg.1343"/>
<dbReference type="eggNOG" id="COG0532">
    <property type="taxonomic scope" value="Bacteria"/>
</dbReference>
<dbReference type="HOGENOM" id="CLU_006301_6_0_4"/>
<dbReference type="Proteomes" id="UP000002676">
    <property type="component" value="Chromosome"/>
</dbReference>
<dbReference type="GO" id="GO:0005829">
    <property type="term" value="C:cytosol"/>
    <property type="evidence" value="ECO:0007669"/>
    <property type="project" value="TreeGrafter"/>
</dbReference>
<dbReference type="GO" id="GO:0005525">
    <property type="term" value="F:GTP binding"/>
    <property type="evidence" value="ECO:0007669"/>
    <property type="project" value="UniProtKB-KW"/>
</dbReference>
<dbReference type="GO" id="GO:0003924">
    <property type="term" value="F:GTPase activity"/>
    <property type="evidence" value="ECO:0007669"/>
    <property type="project" value="UniProtKB-UniRule"/>
</dbReference>
<dbReference type="GO" id="GO:0097216">
    <property type="term" value="F:guanosine tetraphosphate binding"/>
    <property type="evidence" value="ECO:0007669"/>
    <property type="project" value="UniProtKB-ARBA"/>
</dbReference>
<dbReference type="GO" id="GO:0003743">
    <property type="term" value="F:translation initiation factor activity"/>
    <property type="evidence" value="ECO:0007669"/>
    <property type="project" value="UniProtKB-UniRule"/>
</dbReference>
<dbReference type="CDD" id="cd01887">
    <property type="entry name" value="IF2_eIF5B"/>
    <property type="match status" value="1"/>
</dbReference>
<dbReference type="CDD" id="cd03702">
    <property type="entry name" value="IF2_mtIF2_II"/>
    <property type="match status" value="1"/>
</dbReference>
<dbReference type="CDD" id="cd03692">
    <property type="entry name" value="mtIF2_IVc"/>
    <property type="match status" value="1"/>
</dbReference>
<dbReference type="FunFam" id="2.40.30.10:FF:000007">
    <property type="entry name" value="Translation initiation factor IF-2"/>
    <property type="match status" value="1"/>
</dbReference>
<dbReference type="FunFam" id="2.40.30.10:FF:000008">
    <property type="entry name" value="Translation initiation factor IF-2"/>
    <property type="match status" value="1"/>
</dbReference>
<dbReference type="FunFam" id="3.40.50.10050:FF:000001">
    <property type="entry name" value="Translation initiation factor IF-2"/>
    <property type="match status" value="1"/>
</dbReference>
<dbReference type="FunFam" id="3.40.50.300:FF:000019">
    <property type="entry name" value="Translation initiation factor IF-2"/>
    <property type="match status" value="1"/>
</dbReference>
<dbReference type="Gene3D" id="3.40.50.300">
    <property type="entry name" value="P-loop containing nucleotide triphosphate hydrolases"/>
    <property type="match status" value="1"/>
</dbReference>
<dbReference type="Gene3D" id="3.30.56.50">
    <property type="entry name" value="Putative DNA-binding domain, N-terminal subdomain of bacterial translation initiation factor IF2"/>
    <property type="match status" value="1"/>
</dbReference>
<dbReference type="Gene3D" id="2.40.30.10">
    <property type="entry name" value="Translation factors"/>
    <property type="match status" value="2"/>
</dbReference>
<dbReference type="Gene3D" id="3.40.50.10050">
    <property type="entry name" value="Translation initiation factor IF- 2, domain 3"/>
    <property type="match status" value="1"/>
</dbReference>
<dbReference type="HAMAP" id="MF_00100_B">
    <property type="entry name" value="IF_2_B"/>
    <property type="match status" value="1"/>
</dbReference>
<dbReference type="InterPro" id="IPR009061">
    <property type="entry name" value="DNA-bd_dom_put_sf"/>
</dbReference>
<dbReference type="InterPro" id="IPR053905">
    <property type="entry name" value="EF-G-like_DII"/>
</dbReference>
<dbReference type="InterPro" id="IPR004161">
    <property type="entry name" value="EFTu-like_2"/>
</dbReference>
<dbReference type="InterPro" id="IPR013575">
    <property type="entry name" value="IF2_assoc_dom_bac"/>
</dbReference>
<dbReference type="InterPro" id="IPR044145">
    <property type="entry name" value="IF2_II"/>
</dbReference>
<dbReference type="InterPro" id="IPR006847">
    <property type="entry name" value="IF2_N"/>
</dbReference>
<dbReference type="InterPro" id="IPR027417">
    <property type="entry name" value="P-loop_NTPase"/>
</dbReference>
<dbReference type="InterPro" id="IPR005225">
    <property type="entry name" value="Small_GTP-bd"/>
</dbReference>
<dbReference type="InterPro" id="IPR000795">
    <property type="entry name" value="T_Tr_GTP-bd_dom"/>
</dbReference>
<dbReference type="InterPro" id="IPR000178">
    <property type="entry name" value="TF_IF2_bacterial-like"/>
</dbReference>
<dbReference type="InterPro" id="IPR015760">
    <property type="entry name" value="TIF_IF2"/>
</dbReference>
<dbReference type="InterPro" id="IPR023115">
    <property type="entry name" value="TIF_IF2_dom3"/>
</dbReference>
<dbReference type="InterPro" id="IPR036925">
    <property type="entry name" value="TIF_IF2_dom3_sf"/>
</dbReference>
<dbReference type="InterPro" id="IPR009000">
    <property type="entry name" value="Transl_B-barrel_sf"/>
</dbReference>
<dbReference type="NCBIfam" id="TIGR00487">
    <property type="entry name" value="IF-2"/>
    <property type="match status" value="1"/>
</dbReference>
<dbReference type="NCBIfam" id="TIGR00231">
    <property type="entry name" value="small_GTP"/>
    <property type="match status" value="1"/>
</dbReference>
<dbReference type="PANTHER" id="PTHR43381:SF5">
    <property type="entry name" value="TR-TYPE G DOMAIN-CONTAINING PROTEIN"/>
    <property type="match status" value="1"/>
</dbReference>
<dbReference type="PANTHER" id="PTHR43381">
    <property type="entry name" value="TRANSLATION INITIATION FACTOR IF-2-RELATED"/>
    <property type="match status" value="1"/>
</dbReference>
<dbReference type="Pfam" id="PF22042">
    <property type="entry name" value="EF-G_D2"/>
    <property type="match status" value="1"/>
</dbReference>
<dbReference type="Pfam" id="PF00009">
    <property type="entry name" value="GTP_EFTU"/>
    <property type="match status" value="1"/>
</dbReference>
<dbReference type="Pfam" id="PF03144">
    <property type="entry name" value="GTP_EFTU_D2"/>
    <property type="match status" value="1"/>
</dbReference>
<dbReference type="Pfam" id="PF11987">
    <property type="entry name" value="IF-2"/>
    <property type="match status" value="1"/>
</dbReference>
<dbReference type="Pfam" id="PF08364">
    <property type="entry name" value="IF2_assoc"/>
    <property type="match status" value="1"/>
</dbReference>
<dbReference type="Pfam" id="PF04760">
    <property type="entry name" value="IF2_N"/>
    <property type="match status" value="2"/>
</dbReference>
<dbReference type="SUPFAM" id="SSF52156">
    <property type="entry name" value="Initiation factor IF2/eIF5b, domain 3"/>
    <property type="match status" value="1"/>
</dbReference>
<dbReference type="SUPFAM" id="SSF52540">
    <property type="entry name" value="P-loop containing nucleoside triphosphate hydrolases"/>
    <property type="match status" value="1"/>
</dbReference>
<dbReference type="SUPFAM" id="SSF46955">
    <property type="entry name" value="Putative DNA-binding domain"/>
    <property type="match status" value="1"/>
</dbReference>
<dbReference type="SUPFAM" id="SSF50447">
    <property type="entry name" value="Translation proteins"/>
    <property type="match status" value="2"/>
</dbReference>
<dbReference type="PROSITE" id="PS51722">
    <property type="entry name" value="G_TR_2"/>
    <property type="match status" value="1"/>
</dbReference>
<dbReference type="PROSITE" id="PS01176">
    <property type="entry name" value="IF2"/>
    <property type="match status" value="1"/>
</dbReference>
<gene>
    <name evidence="2" type="primary">infB</name>
    <name type="ordered locus">BP1247</name>
</gene>
<protein>
    <recommendedName>
        <fullName evidence="2">Translation initiation factor IF-2</fullName>
    </recommendedName>
</protein>
<evidence type="ECO:0000250" key="1"/>
<evidence type="ECO:0000255" key="2">
    <source>
        <dbReference type="HAMAP-Rule" id="MF_00100"/>
    </source>
</evidence>
<evidence type="ECO:0000256" key="3">
    <source>
        <dbReference type="SAM" id="MobiDB-lite"/>
    </source>
</evidence>
<name>IF2_BORPE</name>
<proteinExistence type="inferred from homology"/>
<keyword id="KW-0963">Cytoplasm</keyword>
<keyword id="KW-0342">GTP-binding</keyword>
<keyword id="KW-0396">Initiation factor</keyword>
<keyword id="KW-0547">Nucleotide-binding</keyword>
<keyword id="KW-0648">Protein biosynthesis</keyword>
<keyword id="KW-1185">Reference proteome</keyword>
<feature type="chain" id="PRO_0000137176" description="Translation initiation factor IF-2">
    <location>
        <begin position="1"/>
        <end position="997"/>
    </location>
</feature>
<feature type="domain" description="tr-type G">
    <location>
        <begin position="498"/>
        <end position="665"/>
    </location>
</feature>
<feature type="region of interest" description="Disordered" evidence="3">
    <location>
        <begin position="101"/>
        <end position="406"/>
    </location>
</feature>
<feature type="region of interest" description="G1" evidence="1">
    <location>
        <begin position="507"/>
        <end position="514"/>
    </location>
</feature>
<feature type="region of interest" description="G2" evidence="1">
    <location>
        <begin position="532"/>
        <end position="536"/>
    </location>
</feature>
<feature type="region of interest" description="G3" evidence="1">
    <location>
        <begin position="553"/>
        <end position="556"/>
    </location>
</feature>
<feature type="region of interest" description="G4" evidence="1">
    <location>
        <begin position="607"/>
        <end position="610"/>
    </location>
</feature>
<feature type="region of interest" description="G5" evidence="1">
    <location>
        <begin position="643"/>
        <end position="645"/>
    </location>
</feature>
<feature type="compositionally biased region" description="Low complexity" evidence="3">
    <location>
        <begin position="116"/>
        <end position="185"/>
    </location>
</feature>
<feature type="compositionally biased region" description="Low complexity" evidence="3">
    <location>
        <begin position="195"/>
        <end position="209"/>
    </location>
</feature>
<feature type="compositionally biased region" description="Polar residues" evidence="3">
    <location>
        <begin position="231"/>
        <end position="242"/>
    </location>
</feature>
<feature type="compositionally biased region" description="Low complexity" evidence="3">
    <location>
        <begin position="256"/>
        <end position="280"/>
    </location>
</feature>
<feature type="compositionally biased region" description="Basic and acidic residues" evidence="3">
    <location>
        <begin position="281"/>
        <end position="292"/>
    </location>
</feature>
<feature type="compositionally biased region" description="Gly residues" evidence="3">
    <location>
        <begin position="385"/>
        <end position="394"/>
    </location>
</feature>
<feature type="binding site" evidence="2">
    <location>
        <begin position="507"/>
        <end position="514"/>
    </location>
    <ligand>
        <name>GTP</name>
        <dbReference type="ChEBI" id="CHEBI:37565"/>
    </ligand>
</feature>
<feature type="binding site" evidence="2">
    <location>
        <begin position="553"/>
        <end position="557"/>
    </location>
    <ligand>
        <name>GTP</name>
        <dbReference type="ChEBI" id="CHEBI:37565"/>
    </ligand>
</feature>
<feature type="binding site" evidence="2">
    <location>
        <begin position="607"/>
        <end position="610"/>
    </location>
    <ligand>
        <name>GTP</name>
        <dbReference type="ChEBI" id="CHEBI:37565"/>
    </ligand>
</feature>
<sequence>MSSNTVAQFATELKMPANVLLEQLRAAGVDLKSVDDAVTDSDKAKLLESLRRAHGATEGKKITLTRRQTSEIRQADATGRSRTIQVEVRKKRVFVKRDPAELAAEQAAARAEEAAAEAVPAEAAPAPAEPVRAEPAVETAAKPVEPPVAEAPAEPVAAPAAEPQPEQPAQAEAQPEPTPAAQAEPEPQPEPQPEAAPAQAVAEPVEPAKNVSVTETEAEQARPEPVVHAQTELTSQTPTPVAQPSAPAESPKSVKAEPAAAPKTTAKPGEIRRAAAPAAPDRAREEARRAAEAEAAALREMLSRPRKVLRAPEPEPQAGALSGTLHKPAGKPATTAAPKKDAKPGAPGAKKTIKTAEVSSTWSDDSARKKPADNKPAVATRDGWRAGGKGGRGGRNSRNQHQDRRHEQVQQEFIAREIHVPETISVADLAHKMSVKAAEVIKQLMKLGQMVTINQVLDQETAMIVVQEFGHTAIAAKLDDPEAFLDETAAVTEAEAEPRAPVVTVMGHVDHGKTSLLDYIRRAKVASGEAGGITQHIGAYHVETGRGVVTFLDTPGHEAFTAMRARGAKATDIVILVVAADDGVMPQTREAIHHAKAGGVPLVVAVNKIDKPEANPERVKQELVAEEVVPEEYGGDVPFVPVSAKTGAGIDDLLENVLLQAEILELKAPIEAPAKGLVIEARLDKGRGPVATILVQSGTLKRGDVVLAGASFGRVRAMLDENGKQIQTAGPSIPVEIQGLTEVPAAGDELMVLSDERKAREIALFRQGKFRDVKLARQQAANLESMFDNLGEGTQTLALIVKTDVQGSQEALVSSLTKLSTDEVRVQVVHAAVGGISESDVNLAIASNAVVIGFNVRAEQSAKKLAETNGIDLRYYNIIYDAVDEVKAAMSGMLAPEKREEVIGLVEVREVYTISRIGTVAGCMVLDGVVRRDSQVRLLRNNVVQWTGHLDSLRRFKDDVKEVKSGFDCGLTLRGNNDLQLGDQLEVFEIKEIARTL</sequence>
<accession>Q7VYR2</accession>